<dbReference type="EC" id="4.1.1.65" evidence="2 3"/>
<dbReference type="EMBL" id="BT021625">
    <property type="protein sequence ID" value="AAX46472.1"/>
    <property type="molecule type" value="mRNA"/>
</dbReference>
<dbReference type="RefSeq" id="NP_001019646.1">
    <property type="nucleotide sequence ID" value="NM_001024475.1"/>
</dbReference>
<dbReference type="RefSeq" id="XP_059731888.1">
    <property type="nucleotide sequence ID" value="XM_059875905.1"/>
</dbReference>
<dbReference type="SMR" id="Q58DH2"/>
<dbReference type="FunCoup" id="Q58DH2">
    <property type="interactions" value="2029"/>
</dbReference>
<dbReference type="PaxDb" id="9913-ENSBTAP00000011848"/>
<dbReference type="GeneID" id="505332"/>
<dbReference type="KEGG" id="bta:505332"/>
<dbReference type="CTD" id="23761"/>
<dbReference type="VEuPathDB" id="HostDB:ENSBTAG00000009006"/>
<dbReference type="eggNOG" id="KOG2420">
    <property type="taxonomic scope" value="Eukaryota"/>
</dbReference>
<dbReference type="HOGENOM" id="CLU_029061_3_0_1"/>
<dbReference type="InParanoid" id="Q58DH2"/>
<dbReference type="OrthoDB" id="4330at2759"/>
<dbReference type="TreeFam" id="TF313148"/>
<dbReference type="SABIO-RK" id="Q58DH2"/>
<dbReference type="UniPathway" id="UPA00558"/>
<dbReference type="Proteomes" id="UP000009136">
    <property type="component" value="Chromosome 17"/>
</dbReference>
<dbReference type="Bgee" id="ENSBTAG00000009006">
    <property type="expression patterns" value="Expressed in caput epididymis and 106 other cell types or tissues"/>
</dbReference>
<dbReference type="GO" id="GO:0005811">
    <property type="term" value="C:lipid droplet"/>
    <property type="evidence" value="ECO:0000250"/>
    <property type="project" value="UniProtKB"/>
</dbReference>
<dbReference type="GO" id="GO:0005743">
    <property type="term" value="C:mitochondrial inner membrane"/>
    <property type="evidence" value="ECO:0007669"/>
    <property type="project" value="UniProtKB-SubCell"/>
</dbReference>
<dbReference type="GO" id="GO:0005739">
    <property type="term" value="C:mitochondrion"/>
    <property type="evidence" value="ECO:0000250"/>
    <property type="project" value="UniProtKB"/>
</dbReference>
<dbReference type="GO" id="GO:0004609">
    <property type="term" value="F:phosphatidylserine decarboxylase activity"/>
    <property type="evidence" value="ECO:0000250"/>
    <property type="project" value="UniProtKB"/>
</dbReference>
<dbReference type="GO" id="GO:0140042">
    <property type="term" value="P:lipid droplet formation"/>
    <property type="evidence" value="ECO:0000250"/>
    <property type="project" value="UniProtKB"/>
</dbReference>
<dbReference type="GO" id="GO:0035694">
    <property type="term" value="P:mitochondrial protein catabolic process"/>
    <property type="evidence" value="ECO:0000250"/>
    <property type="project" value="UniProtKB"/>
</dbReference>
<dbReference type="GO" id="GO:0006646">
    <property type="term" value="P:phosphatidylethanolamine biosynthetic process"/>
    <property type="evidence" value="ECO:0000250"/>
    <property type="project" value="UniProtKB"/>
</dbReference>
<dbReference type="GO" id="GO:0016540">
    <property type="term" value="P:protein autoprocessing"/>
    <property type="evidence" value="ECO:0007669"/>
    <property type="project" value="UniProtKB-UniRule"/>
</dbReference>
<dbReference type="GO" id="GO:0010821">
    <property type="term" value="P:regulation of mitochondrion organization"/>
    <property type="evidence" value="ECO:0000250"/>
    <property type="project" value="UniProtKB"/>
</dbReference>
<dbReference type="HAMAP" id="MF_03208">
    <property type="entry name" value="PS_decarb_PSD_B_type1_euk"/>
    <property type="match status" value="1"/>
</dbReference>
<dbReference type="InterPro" id="IPR003817">
    <property type="entry name" value="PS_Dcarbxylase"/>
</dbReference>
<dbReference type="InterPro" id="IPR033177">
    <property type="entry name" value="PSD-B"/>
</dbReference>
<dbReference type="InterPro" id="IPR033661">
    <property type="entry name" value="PSD_type1_euk"/>
</dbReference>
<dbReference type="NCBIfam" id="TIGR00163">
    <property type="entry name" value="PS_decarb"/>
    <property type="match status" value="1"/>
</dbReference>
<dbReference type="PANTHER" id="PTHR10067">
    <property type="entry name" value="PHOSPHATIDYLSERINE DECARBOXYLASE"/>
    <property type="match status" value="1"/>
</dbReference>
<dbReference type="PANTHER" id="PTHR10067:SF6">
    <property type="entry name" value="PHOSPHATIDYLSERINE DECARBOXYLASE PROENZYME, MITOCHONDRIAL"/>
    <property type="match status" value="1"/>
</dbReference>
<dbReference type="Pfam" id="PF02666">
    <property type="entry name" value="PS_Dcarbxylase"/>
    <property type="match status" value="1"/>
</dbReference>
<reference key="1">
    <citation type="journal article" date="2005" name="BMC Genomics">
        <title>Characterization of 954 bovine full-CDS cDNA sequences.</title>
        <authorList>
            <person name="Harhay G.P."/>
            <person name="Sonstegard T.S."/>
            <person name="Keele J.W."/>
            <person name="Heaton M.P."/>
            <person name="Clawson M.L."/>
            <person name="Snelling W.M."/>
            <person name="Wiedmann R.T."/>
            <person name="Van Tassell C.P."/>
            <person name="Smith T.P.L."/>
        </authorList>
    </citation>
    <scope>NUCLEOTIDE SEQUENCE [LARGE SCALE MRNA]</scope>
</reference>
<reference key="2">
    <citation type="journal article" date="1983" name="Arch. Biochem. Biophys.">
        <title>Characterization of brain phosphatidylserine decarboxylase: localization in the mitochondrial inner membrane.</title>
        <authorList>
            <person name="Percy A.K."/>
            <person name="Moore J.F."/>
            <person name="Carson M.A."/>
            <person name="Waechter C.J."/>
        </authorList>
    </citation>
    <scope>SUBCELLULAR LOCATION</scope>
</reference>
<organism>
    <name type="scientific">Bos taurus</name>
    <name type="common">Bovine</name>
    <dbReference type="NCBI Taxonomy" id="9913"/>
    <lineage>
        <taxon>Eukaryota</taxon>
        <taxon>Metazoa</taxon>
        <taxon>Chordata</taxon>
        <taxon>Craniata</taxon>
        <taxon>Vertebrata</taxon>
        <taxon>Euteleostomi</taxon>
        <taxon>Mammalia</taxon>
        <taxon>Eutheria</taxon>
        <taxon>Laurasiatheria</taxon>
        <taxon>Artiodactyla</taxon>
        <taxon>Ruminantia</taxon>
        <taxon>Pecora</taxon>
        <taxon>Bovidae</taxon>
        <taxon>Bovinae</taxon>
        <taxon>Bos</taxon>
    </lineage>
</organism>
<accession>Q58DH2</accession>
<name>PISD_BOVIN</name>
<evidence type="ECO:0000250" key="1">
    <source>
        <dbReference type="UniProtKB" id="A0A8H4BVL9"/>
    </source>
</evidence>
<evidence type="ECO:0000250" key="2">
    <source>
        <dbReference type="UniProtKB" id="Q9UG56"/>
    </source>
</evidence>
<evidence type="ECO:0000255" key="3">
    <source>
        <dbReference type="HAMAP-Rule" id="MF_03208"/>
    </source>
</evidence>
<evidence type="ECO:0000269" key="4">
    <source>
    </source>
</evidence>
<keyword id="KW-0963">Cytoplasm</keyword>
<keyword id="KW-0210">Decarboxylase</keyword>
<keyword id="KW-0444">Lipid biosynthesis</keyword>
<keyword id="KW-0551">Lipid droplet</keyword>
<keyword id="KW-0443">Lipid metabolism</keyword>
<keyword id="KW-0456">Lyase</keyword>
<keyword id="KW-0472">Membrane</keyword>
<keyword id="KW-0496">Mitochondrion</keyword>
<keyword id="KW-0999">Mitochondrion inner membrane</keyword>
<keyword id="KW-0594">Phospholipid biosynthesis</keyword>
<keyword id="KW-1208">Phospholipid metabolism</keyword>
<keyword id="KW-0670">Pyruvate</keyword>
<keyword id="KW-1185">Reference proteome</keyword>
<keyword id="KW-0812">Transmembrane</keyword>
<keyword id="KW-1133">Transmembrane helix</keyword>
<keyword id="KW-0865">Zymogen</keyword>
<proteinExistence type="evidence at transcript level"/>
<protein>
    <recommendedName>
        <fullName evidence="3">Phosphatidylserine decarboxylase proenzyme, mitochondrial</fullName>
        <ecNumber evidence="2 3">4.1.1.65</ecNumber>
    </recommendedName>
    <component>
        <recommendedName>
            <fullName evidence="3">Phosphatidylserine decarboxylase beta chain</fullName>
        </recommendedName>
    </component>
    <component>
        <recommendedName>
            <fullName evidence="3">Phosphatidylserine decarboxylase alpha chain</fullName>
        </recommendedName>
    </component>
</protein>
<feature type="chain" id="PRO_0000435569" description="Phosphatidylserine decarboxylase proenzyme, mitochondrial">
    <location>
        <begin position="1"/>
        <end position="416"/>
    </location>
</feature>
<feature type="chain" id="PRO_0000262287" description="Phosphatidylserine decarboxylase beta chain" evidence="3">
    <location>
        <begin position="1"/>
        <end position="384"/>
    </location>
</feature>
<feature type="chain" id="PRO_0000262288" description="Phosphatidylserine decarboxylase alpha chain" evidence="3">
    <location>
        <begin position="385"/>
        <end position="416"/>
    </location>
</feature>
<feature type="topological domain" description="Mitochondrial matrix" evidence="3">
    <location>
        <begin position="1"/>
        <end position="67"/>
    </location>
</feature>
<feature type="transmembrane region" description="Helical" evidence="3">
    <location>
        <begin position="68"/>
        <end position="86"/>
    </location>
</feature>
<feature type="topological domain" description="Mitochondrial intermembrane" evidence="3">
    <location>
        <begin position="87"/>
        <end position="416"/>
    </location>
</feature>
<feature type="active site" description="Charge relay system; for autoendoproteolytic cleavage activity" evidence="3">
    <location>
        <position position="198"/>
    </location>
</feature>
<feature type="active site" description="Charge relay system; for autoendoproteolytic cleavage activity" evidence="3">
    <location>
        <position position="274"/>
    </location>
</feature>
<feature type="active site" description="Charge relay system; for autoendoproteolytic cleavage activity" evidence="3">
    <location>
        <position position="385"/>
    </location>
</feature>
<feature type="active site" description="Schiff-base intermediate with substrate; via pyruvic acid; for decarboxylase activity" evidence="3">
    <location>
        <position position="385"/>
    </location>
</feature>
<feature type="site" description="Cleavage (non-hydrolytic); by autocatalysis" evidence="3">
    <location>
        <begin position="384"/>
        <end position="385"/>
    </location>
</feature>
<feature type="modified residue" description="Pyruvic acid (Ser); by autocatalysis" evidence="3">
    <location>
        <position position="385"/>
    </location>
</feature>
<sequence length="416" mass="47244">MPGKSTRPLPAPRPCCAPCPFWSPRLAGMQGTGSTRSTGSESWRSWAWTSRPSLLVTGRLHFPQLALRRRLGQLSCMSKPALKLRSWPLTVLYYLLPLGALRPLSRVGWRPVSRVALYKSVPTRLLSRAWGRLNQVELPHWLRRPVYSLYIWTFGVNMKEAAVEDLHHYRNLSEFFRRKLKPQARPVCGLHSVISPSDGKILNFGQVKNCEVEQVKGVTYSLESFLGPRTPSEDLPFPPATPHSSFRSQLVTREGNELYHCVIYLAPGDYHCFHSPTDWTVSHRRHFPGSLMSVNPGMARWIKELFCHNERVVLTGDWKHGFFSLTAVGATNVGSIRIYFDRDLHTNSPRYSKGSYNDFSFVTHANKEGIPMRKGEHLGEFNLGSTIVLIFEAPKDFNFRLQAGQKIRFGEALGSL</sequence>
<comment type="function">
    <text evidence="1 3">Catalyzes the formation of phosphatidylethanolamine (PtdEtn) from phosphatidylserine (PtdSer). Plays a central role in phospholipid metabolism and in the interorganelle trafficking of phosphatidylserine. May be involved in lipid droplet biogenesis at the endoplasmic reticulum membrane (By similarity).</text>
</comment>
<comment type="catalytic activity">
    <reaction evidence="3">
        <text>a 1,2-diacyl-sn-glycero-3-phospho-L-serine + H(+) = a 1,2-diacyl-sn-glycero-3-phosphoethanolamine + CO2</text>
        <dbReference type="Rhea" id="RHEA:20828"/>
        <dbReference type="ChEBI" id="CHEBI:15378"/>
        <dbReference type="ChEBI" id="CHEBI:16526"/>
        <dbReference type="ChEBI" id="CHEBI:57262"/>
        <dbReference type="ChEBI" id="CHEBI:64612"/>
        <dbReference type="EC" id="4.1.1.65"/>
    </reaction>
    <physiologicalReaction direction="left-to-right" evidence="2">
        <dbReference type="Rhea" id="RHEA:20829"/>
    </physiologicalReaction>
</comment>
<comment type="cofactor">
    <cofactor evidence="3">
        <name>pyruvate</name>
        <dbReference type="ChEBI" id="CHEBI:15361"/>
    </cofactor>
    <text evidence="3">Binds 1 pyruvoyl group covalently per subunit.</text>
</comment>
<comment type="pathway">
    <text evidence="2">Phospholipid metabolism; phosphatidylethanolamine biosynthesis.</text>
</comment>
<comment type="subunit">
    <text evidence="3">Heterodimer of a large membrane-associated beta subunit and a small pyruvoyl-containing alpha subunit.</text>
</comment>
<comment type="subcellular location">
    <molecule>Phosphatidylserine decarboxylase beta chain</molecule>
    <subcellularLocation>
        <location evidence="3 4">Mitochondrion inner membrane</location>
        <topology evidence="3">Single-pass membrane protein</topology>
        <orientation evidence="3">Intermembrane side</orientation>
    </subcellularLocation>
</comment>
<comment type="subcellular location">
    <molecule>Phosphatidylserine decarboxylase alpha chain</molecule>
    <subcellularLocation>
        <location evidence="3 4">Mitochondrion inner membrane</location>
        <topology evidence="3">Peripheral membrane protein</topology>
        <orientation evidence="3">Intermembrane side</orientation>
    </subcellularLocation>
    <subcellularLocation>
        <location evidence="2">Cytoplasm</location>
    </subcellularLocation>
    <text evidence="3">Anchored to the mitochondrial inner membrane through its interaction with the integral membrane beta chain.</text>
</comment>
<comment type="subcellular location">
    <subcellularLocation>
        <location evidence="2">Mitochondrion inner membrane</location>
    </subcellularLocation>
    <subcellularLocation>
        <location evidence="2">Lipid droplet</location>
    </subcellularLocation>
    <text evidence="2">Predominantly localizes to lipid droplets in lipid-replete conditions, and to mitochondria in lipid-deplete conditions.</text>
</comment>
<comment type="PTM">
    <text evidence="3">Is synthesized initially as an inactive proenzyme. Formation of the active enzyme involves a self-maturation process in which the active site pyruvoyl group is generated from an internal serine residue via an autocatalytic post-translational modification. Two non-identical subunits are generated from the proenzyme in this reaction, and the pyruvate is formed at the N-terminus of the alpha chain, which is derived from the carboxyl end of the proenzyme. The autoendoproteolytic cleavage occurs by a canonical serine protease mechanism, in which the side chain hydroxyl group of the serine supplies its oxygen atom to form the C-terminus of the beta chain, while the remainder of the serine residue undergoes an oxidative deamination to produce ammonia and the pyruvoyl prosthetic group on the alpha chain. During this reaction, the Ser that is part of the protease active site of the proenzyme becomes the pyruvoyl prosthetic group, which constitutes an essential element of the active site of the mature decarboxylase.</text>
</comment>
<comment type="miscellaneous">
    <text evidence="3">This protein may be expected to contain an N-terminal transit peptide but none has been predicted.</text>
</comment>
<comment type="similarity">
    <text evidence="3">Belongs to the phosphatidylserine decarboxylase family. PSD-B subfamily. Eukaryotic type I sub-subfamily.</text>
</comment>
<gene>
    <name evidence="3" type="primary">PISD</name>
</gene>